<proteinExistence type="inferred from homology"/>
<name>TRPF_HALH5</name>
<protein>
    <recommendedName>
        <fullName evidence="1">N-(5'-phosphoribosyl)anthranilate isomerase</fullName>
        <shortName evidence="1">PRAI</shortName>
        <ecNumber evidence="1">5.3.1.24</ecNumber>
    </recommendedName>
</protein>
<feature type="chain" id="PRO_0000154345" description="N-(5'-phosphoribosyl)anthranilate isomerase">
    <location>
        <begin position="1"/>
        <end position="218"/>
    </location>
</feature>
<organism>
    <name type="scientific">Halalkalibacterium halodurans (strain ATCC BAA-125 / DSM 18197 / FERM 7344 / JCM 9153 / C-125)</name>
    <name type="common">Bacillus halodurans</name>
    <dbReference type="NCBI Taxonomy" id="272558"/>
    <lineage>
        <taxon>Bacteria</taxon>
        <taxon>Bacillati</taxon>
        <taxon>Bacillota</taxon>
        <taxon>Bacilli</taxon>
        <taxon>Bacillales</taxon>
        <taxon>Bacillaceae</taxon>
        <taxon>Halalkalibacterium (ex Joshi et al. 2022)</taxon>
    </lineage>
</organism>
<accession>Q9KCB1</accession>
<sequence>MQPMLKYCGNRSLEDVQAAATSKADYLGFVFAKSKRQVTVNEVTRWLDQVNVNGKKLVALFVNEPIDQIVNVVKQGPFDVIQCHGTENRDYIMTLKERIDLPVWKAIHHSGQGLQMMRALEGVVEAFVVDAKVEGQWGGTGQSFDWHVVPLYLQEGKRQQVPVFIAGGINPHNVELLLPYGPCGIDISSGIEENGQKSSAKICQIEKKVLGDDSHISR</sequence>
<reference key="1">
    <citation type="journal article" date="2000" name="Nucleic Acids Res.">
        <title>Complete genome sequence of the alkaliphilic bacterium Bacillus halodurans and genomic sequence comparison with Bacillus subtilis.</title>
        <authorList>
            <person name="Takami H."/>
            <person name="Nakasone K."/>
            <person name="Takaki Y."/>
            <person name="Maeno G."/>
            <person name="Sasaki R."/>
            <person name="Masui N."/>
            <person name="Fuji F."/>
            <person name="Hirama C."/>
            <person name="Nakamura Y."/>
            <person name="Ogasawara N."/>
            <person name="Kuhara S."/>
            <person name="Horikoshi K."/>
        </authorList>
    </citation>
    <scope>NUCLEOTIDE SEQUENCE [LARGE SCALE GENOMIC DNA]</scope>
    <source>
        <strain>ATCC BAA-125 / DSM 18197 / FERM 7344 / JCM 9153 / C-125</strain>
    </source>
</reference>
<gene>
    <name evidence="1" type="primary">trpF</name>
    <name type="ordered locus">BH1662</name>
</gene>
<evidence type="ECO:0000255" key="1">
    <source>
        <dbReference type="HAMAP-Rule" id="MF_00135"/>
    </source>
</evidence>
<dbReference type="EC" id="5.3.1.24" evidence="1"/>
<dbReference type="EMBL" id="BA000004">
    <property type="protein sequence ID" value="BAB05381.1"/>
    <property type="molecule type" value="Genomic_DNA"/>
</dbReference>
<dbReference type="PIR" id="F83857">
    <property type="entry name" value="F83857"/>
</dbReference>
<dbReference type="RefSeq" id="WP_010897824.1">
    <property type="nucleotide sequence ID" value="NC_002570.2"/>
</dbReference>
<dbReference type="SMR" id="Q9KCB1"/>
<dbReference type="STRING" id="272558.gene:10727560"/>
<dbReference type="KEGG" id="bha:BH1662"/>
<dbReference type="eggNOG" id="COG0135">
    <property type="taxonomic scope" value="Bacteria"/>
</dbReference>
<dbReference type="HOGENOM" id="CLU_076364_1_0_9"/>
<dbReference type="OrthoDB" id="9786954at2"/>
<dbReference type="UniPathway" id="UPA00035">
    <property type="reaction ID" value="UER00042"/>
</dbReference>
<dbReference type="Proteomes" id="UP000001258">
    <property type="component" value="Chromosome"/>
</dbReference>
<dbReference type="GO" id="GO:0004640">
    <property type="term" value="F:phosphoribosylanthranilate isomerase activity"/>
    <property type="evidence" value="ECO:0007669"/>
    <property type="project" value="UniProtKB-UniRule"/>
</dbReference>
<dbReference type="GO" id="GO:0000162">
    <property type="term" value="P:L-tryptophan biosynthetic process"/>
    <property type="evidence" value="ECO:0007669"/>
    <property type="project" value="UniProtKB-UniRule"/>
</dbReference>
<dbReference type="CDD" id="cd00405">
    <property type="entry name" value="PRAI"/>
    <property type="match status" value="1"/>
</dbReference>
<dbReference type="Gene3D" id="3.20.20.70">
    <property type="entry name" value="Aldolase class I"/>
    <property type="match status" value="1"/>
</dbReference>
<dbReference type="HAMAP" id="MF_00135">
    <property type="entry name" value="PRAI"/>
    <property type="match status" value="1"/>
</dbReference>
<dbReference type="InterPro" id="IPR013785">
    <property type="entry name" value="Aldolase_TIM"/>
</dbReference>
<dbReference type="InterPro" id="IPR001240">
    <property type="entry name" value="PRAI_dom"/>
</dbReference>
<dbReference type="InterPro" id="IPR011060">
    <property type="entry name" value="RibuloseP-bd_barrel"/>
</dbReference>
<dbReference type="InterPro" id="IPR044643">
    <property type="entry name" value="TrpF_fam"/>
</dbReference>
<dbReference type="NCBIfam" id="NF002301">
    <property type="entry name" value="PRK01222.2-1"/>
    <property type="match status" value="1"/>
</dbReference>
<dbReference type="PANTHER" id="PTHR42894">
    <property type="entry name" value="N-(5'-PHOSPHORIBOSYL)ANTHRANILATE ISOMERASE"/>
    <property type="match status" value="1"/>
</dbReference>
<dbReference type="PANTHER" id="PTHR42894:SF1">
    <property type="entry name" value="N-(5'-PHOSPHORIBOSYL)ANTHRANILATE ISOMERASE"/>
    <property type="match status" value="1"/>
</dbReference>
<dbReference type="Pfam" id="PF00697">
    <property type="entry name" value="PRAI"/>
    <property type="match status" value="1"/>
</dbReference>
<dbReference type="SUPFAM" id="SSF51366">
    <property type="entry name" value="Ribulose-phoshate binding barrel"/>
    <property type="match status" value="1"/>
</dbReference>
<keyword id="KW-0028">Amino-acid biosynthesis</keyword>
<keyword id="KW-0057">Aromatic amino acid biosynthesis</keyword>
<keyword id="KW-0413">Isomerase</keyword>
<keyword id="KW-1185">Reference proteome</keyword>
<keyword id="KW-0822">Tryptophan biosynthesis</keyword>
<comment type="catalytic activity">
    <reaction evidence="1">
        <text>N-(5-phospho-beta-D-ribosyl)anthranilate = 1-(2-carboxyphenylamino)-1-deoxy-D-ribulose 5-phosphate</text>
        <dbReference type="Rhea" id="RHEA:21540"/>
        <dbReference type="ChEBI" id="CHEBI:18277"/>
        <dbReference type="ChEBI" id="CHEBI:58613"/>
        <dbReference type="EC" id="5.3.1.24"/>
    </reaction>
</comment>
<comment type="pathway">
    <text evidence="1">Amino-acid biosynthesis; L-tryptophan biosynthesis; L-tryptophan from chorismate: step 3/5.</text>
</comment>
<comment type="similarity">
    <text evidence="1">Belongs to the TrpF family.</text>
</comment>